<name>REPS2_HUMAN</name>
<reference key="1">
    <citation type="journal article" date="1998" name="J. Biol. Chem.">
        <title>Identification and characterization of a novel protein interacting with Ral-binding protein 1, a putative effector protein of Ral.</title>
        <authorList>
            <person name="Ikeda M."/>
            <person name="Ishida O."/>
            <person name="Hinoi T."/>
            <person name="Kishida S."/>
            <person name="Kikuchi A."/>
        </authorList>
    </citation>
    <scope>NUCLEOTIDE SEQUENCE [MRNA] (ISOFORM 1)</scope>
    <scope>FUNCTION</scope>
    <scope>INTERACTION WITH GRB2 AND RALPB1</scope>
    <scope>PHOSPHORYLATION</scope>
    <scope>REGION</scope>
    <source>
        <tissue>Brain</tissue>
    </source>
</reference>
<reference key="2">
    <citation type="journal article" date="2003" name="Oncogene">
        <title>REPS2/POB1 is downregulated during human prostate cancer progression and inhibits growth factor signalling in prostate cancer cells.</title>
        <authorList>
            <person name="Oosterhoff J.K."/>
            <person name="Penninkhof F."/>
            <person name="Brinkmann A.O."/>
            <person name="Anton Grootegoed J."/>
            <person name="Blok L.J."/>
        </authorList>
    </citation>
    <scope>NUCLEOTIDE SEQUENCE [MRNA] (ISOFORM 2)</scope>
    <scope>FUNCTION</scope>
    <scope>SUBCELLULAR LOCATION</scope>
    <scope>TISSUE SPECIFICITY</scope>
    <source>
        <tissue>Hypothalamus</tissue>
    </source>
</reference>
<reference key="3">
    <citation type="journal article" date="2005" name="Nature">
        <title>The DNA sequence of the human X chromosome.</title>
        <authorList>
            <person name="Ross M.T."/>
            <person name="Grafham D.V."/>
            <person name="Coffey A.J."/>
            <person name="Scherer S."/>
            <person name="McLay K."/>
            <person name="Muzny D."/>
            <person name="Platzer M."/>
            <person name="Howell G.R."/>
            <person name="Burrows C."/>
            <person name="Bird C.P."/>
            <person name="Frankish A."/>
            <person name="Lovell F.L."/>
            <person name="Howe K.L."/>
            <person name="Ashurst J.L."/>
            <person name="Fulton R.S."/>
            <person name="Sudbrak R."/>
            <person name="Wen G."/>
            <person name="Jones M.C."/>
            <person name="Hurles M.E."/>
            <person name="Andrews T.D."/>
            <person name="Scott C.E."/>
            <person name="Searle S."/>
            <person name="Ramser J."/>
            <person name="Whittaker A."/>
            <person name="Deadman R."/>
            <person name="Carter N.P."/>
            <person name="Hunt S.E."/>
            <person name="Chen R."/>
            <person name="Cree A."/>
            <person name="Gunaratne P."/>
            <person name="Havlak P."/>
            <person name="Hodgson A."/>
            <person name="Metzker M.L."/>
            <person name="Richards S."/>
            <person name="Scott G."/>
            <person name="Steffen D."/>
            <person name="Sodergren E."/>
            <person name="Wheeler D.A."/>
            <person name="Worley K.C."/>
            <person name="Ainscough R."/>
            <person name="Ambrose K.D."/>
            <person name="Ansari-Lari M.A."/>
            <person name="Aradhya S."/>
            <person name="Ashwell R.I."/>
            <person name="Babbage A.K."/>
            <person name="Bagguley C.L."/>
            <person name="Ballabio A."/>
            <person name="Banerjee R."/>
            <person name="Barker G.E."/>
            <person name="Barlow K.F."/>
            <person name="Barrett I.P."/>
            <person name="Bates K.N."/>
            <person name="Beare D.M."/>
            <person name="Beasley H."/>
            <person name="Beasley O."/>
            <person name="Beck A."/>
            <person name="Bethel G."/>
            <person name="Blechschmidt K."/>
            <person name="Brady N."/>
            <person name="Bray-Allen S."/>
            <person name="Bridgeman A.M."/>
            <person name="Brown A.J."/>
            <person name="Brown M.J."/>
            <person name="Bonnin D."/>
            <person name="Bruford E.A."/>
            <person name="Buhay C."/>
            <person name="Burch P."/>
            <person name="Burford D."/>
            <person name="Burgess J."/>
            <person name="Burrill W."/>
            <person name="Burton J."/>
            <person name="Bye J.M."/>
            <person name="Carder C."/>
            <person name="Carrel L."/>
            <person name="Chako J."/>
            <person name="Chapman J.C."/>
            <person name="Chavez D."/>
            <person name="Chen E."/>
            <person name="Chen G."/>
            <person name="Chen Y."/>
            <person name="Chen Z."/>
            <person name="Chinault C."/>
            <person name="Ciccodicola A."/>
            <person name="Clark S.Y."/>
            <person name="Clarke G."/>
            <person name="Clee C.M."/>
            <person name="Clegg S."/>
            <person name="Clerc-Blankenburg K."/>
            <person name="Clifford K."/>
            <person name="Cobley V."/>
            <person name="Cole C.G."/>
            <person name="Conquer J.S."/>
            <person name="Corby N."/>
            <person name="Connor R.E."/>
            <person name="David R."/>
            <person name="Davies J."/>
            <person name="Davis C."/>
            <person name="Davis J."/>
            <person name="Delgado O."/>
            <person name="Deshazo D."/>
            <person name="Dhami P."/>
            <person name="Ding Y."/>
            <person name="Dinh H."/>
            <person name="Dodsworth S."/>
            <person name="Draper H."/>
            <person name="Dugan-Rocha S."/>
            <person name="Dunham A."/>
            <person name="Dunn M."/>
            <person name="Durbin K.J."/>
            <person name="Dutta I."/>
            <person name="Eades T."/>
            <person name="Ellwood M."/>
            <person name="Emery-Cohen A."/>
            <person name="Errington H."/>
            <person name="Evans K.L."/>
            <person name="Faulkner L."/>
            <person name="Francis F."/>
            <person name="Frankland J."/>
            <person name="Fraser A.E."/>
            <person name="Galgoczy P."/>
            <person name="Gilbert J."/>
            <person name="Gill R."/>
            <person name="Gloeckner G."/>
            <person name="Gregory S.G."/>
            <person name="Gribble S."/>
            <person name="Griffiths C."/>
            <person name="Grocock R."/>
            <person name="Gu Y."/>
            <person name="Gwilliam R."/>
            <person name="Hamilton C."/>
            <person name="Hart E.A."/>
            <person name="Hawes A."/>
            <person name="Heath P.D."/>
            <person name="Heitmann K."/>
            <person name="Hennig S."/>
            <person name="Hernandez J."/>
            <person name="Hinzmann B."/>
            <person name="Ho S."/>
            <person name="Hoffs M."/>
            <person name="Howden P.J."/>
            <person name="Huckle E.J."/>
            <person name="Hume J."/>
            <person name="Hunt P.J."/>
            <person name="Hunt A.R."/>
            <person name="Isherwood J."/>
            <person name="Jacob L."/>
            <person name="Johnson D."/>
            <person name="Jones S."/>
            <person name="de Jong P.J."/>
            <person name="Joseph S.S."/>
            <person name="Keenan S."/>
            <person name="Kelly S."/>
            <person name="Kershaw J.K."/>
            <person name="Khan Z."/>
            <person name="Kioschis P."/>
            <person name="Klages S."/>
            <person name="Knights A.J."/>
            <person name="Kosiura A."/>
            <person name="Kovar-Smith C."/>
            <person name="Laird G.K."/>
            <person name="Langford C."/>
            <person name="Lawlor S."/>
            <person name="Leversha M."/>
            <person name="Lewis L."/>
            <person name="Liu W."/>
            <person name="Lloyd C."/>
            <person name="Lloyd D.M."/>
            <person name="Loulseged H."/>
            <person name="Loveland J.E."/>
            <person name="Lovell J.D."/>
            <person name="Lozado R."/>
            <person name="Lu J."/>
            <person name="Lyne R."/>
            <person name="Ma J."/>
            <person name="Maheshwari M."/>
            <person name="Matthews L.H."/>
            <person name="McDowall J."/>
            <person name="McLaren S."/>
            <person name="McMurray A."/>
            <person name="Meidl P."/>
            <person name="Meitinger T."/>
            <person name="Milne S."/>
            <person name="Miner G."/>
            <person name="Mistry S.L."/>
            <person name="Morgan M."/>
            <person name="Morris S."/>
            <person name="Mueller I."/>
            <person name="Mullikin J.C."/>
            <person name="Nguyen N."/>
            <person name="Nordsiek G."/>
            <person name="Nyakatura G."/>
            <person name="O'dell C.N."/>
            <person name="Okwuonu G."/>
            <person name="Palmer S."/>
            <person name="Pandian R."/>
            <person name="Parker D."/>
            <person name="Parrish J."/>
            <person name="Pasternak S."/>
            <person name="Patel D."/>
            <person name="Pearce A.V."/>
            <person name="Pearson D.M."/>
            <person name="Pelan S.E."/>
            <person name="Perez L."/>
            <person name="Porter K.M."/>
            <person name="Ramsey Y."/>
            <person name="Reichwald K."/>
            <person name="Rhodes S."/>
            <person name="Ridler K.A."/>
            <person name="Schlessinger D."/>
            <person name="Schueler M.G."/>
            <person name="Sehra H.K."/>
            <person name="Shaw-Smith C."/>
            <person name="Shen H."/>
            <person name="Sheridan E.M."/>
            <person name="Shownkeen R."/>
            <person name="Skuce C.D."/>
            <person name="Smith M.L."/>
            <person name="Sotheran E.C."/>
            <person name="Steingruber H.E."/>
            <person name="Steward C.A."/>
            <person name="Storey R."/>
            <person name="Swann R.M."/>
            <person name="Swarbreck D."/>
            <person name="Tabor P.E."/>
            <person name="Taudien S."/>
            <person name="Taylor T."/>
            <person name="Teague B."/>
            <person name="Thomas K."/>
            <person name="Thorpe A."/>
            <person name="Timms K."/>
            <person name="Tracey A."/>
            <person name="Trevanion S."/>
            <person name="Tromans A.C."/>
            <person name="d'Urso M."/>
            <person name="Verduzco D."/>
            <person name="Villasana D."/>
            <person name="Waldron L."/>
            <person name="Wall M."/>
            <person name="Wang Q."/>
            <person name="Warren J."/>
            <person name="Warry G.L."/>
            <person name="Wei X."/>
            <person name="West A."/>
            <person name="Whitehead S.L."/>
            <person name="Whiteley M.N."/>
            <person name="Wilkinson J.E."/>
            <person name="Willey D.L."/>
            <person name="Williams G."/>
            <person name="Williams L."/>
            <person name="Williamson A."/>
            <person name="Williamson H."/>
            <person name="Wilming L."/>
            <person name="Woodmansey R.L."/>
            <person name="Wray P.W."/>
            <person name="Yen J."/>
            <person name="Zhang J."/>
            <person name="Zhou J."/>
            <person name="Zoghbi H."/>
            <person name="Zorilla S."/>
            <person name="Buck D."/>
            <person name="Reinhardt R."/>
            <person name="Poustka A."/>
            <person name="Rosenthal A."/>
            <person name="Lehrach H."/>
            <person name="Meindl A."/>
            <person name="Minx P.J."/>
            <person name="Hillier L.W."/>
            <person name="Willard H.F."/>
            <person name="Wilson R.K."/>
            <person name="Waterston R.H."/>
            <person name="Rice C.M."/>
            <person name="Vaudin M."/>
            <person name="Coulson A."/>
            <person name="Nelson D.L."/>
            <person name="Weinstock G."/>
            <person name="Sulston J.E."/>
            <person name="Durbin R.M."/>
            <person name="Hubbard T."/>
            <person name="Gibbs R.A."/>
            <person name="Beck S."/>
            <person name="Rogers J."/>
            <person name="Bentley D.R."/>
        </authorList>
    </citation>
    <scope>NUCLEOTIDE SEQUENCE [LARGE SCALE GENOMIC DNA]</scope>
</reference>
<reference key="4">
    <citation type="journal article" date="1999" name="EMBO J.">
        <title>Small G protein Ral and its downstream molecules regulate endocytosis of EGF and insulin receptors.</title>
        <authorList>
            <person name="Nakashima S."/>
            <person name="Morinaka K."/>
            <person name="Koyama S."/>
            <person name="Ikeda M."/>
            <person name="Kishida M."/>
            <person name="Okawa K."/>
            <person name="Iwamatsu A."/>
            <person name="Kishida S."/>
            <person name="Kikuchi A."/>
        </authorList>
    </citation>
    <scope>FUNCTION</scope>
    <scope>INTERACTION WITH EPN1; EPS15 AND EPS15L1</scope>
</reference>
<reference key="5">
    <citation type="journal article" date="1999" name="Oncogene">
        <title>Epsin binds to the EH domain of POB1 and regulates receptor-mediated endocytosis.</title>
        <authorList>
            <person name="Morinaka K."/>
            <person name="Koyama S."/>
            <person name="Nakashima S."/>
            <person name="Hinoi T."/>
            <person name="Okawa K."/>
            <person name="Iwamatsu A."/>
            <person name="Kikuchi A."/>
        </authorList>
    </citation>
    <scope>INTERACTION WITH EPN1</scope>
</reference>
<reference key="6">
    <citation type="journal article" date="2002" name="J. Biol. Chem.">
        <title>Interaction of POB1, a downstream molecule of small G protein Ral, with PAG2, a paxillin-binding protein, is involved in cell migration.</title>
        <authorList>
            <person name="Oshiro T."/>
            <person name="Koyama S."/>
            <person name="Sugiyama S."/>
            <person name="Kondo A."/>
            <person name="Onodera Y."/>
            <person name="Asahara T."/>
            <person name="Sabe H."/>
            <person name="Kikuchi A."/>
        </authorList>
    </citation>
    <scope>FUNCTION</scope>
    <scope>INTERACTION WITH ASAP1</scope>
    <scope>MUTAGENESIS OF PRO-562 AND PRO-565</scope>
    <scope>REGION</scope>
</reference>
<reference key="7">
    <citation type="journal article" date="2014" name="J. Proteomics">
        <title>An enzyme assisted RP-RPLC approach for in-depth analysis of human liver phosphoproteome.</title>
        <authorList>
            <person name="Bian Y."/>
            <person name="Song C."/>
            <person name="Cheng K."/>
            <person name="Dong M."/>
            <person name="Wang F."/>
            <person name="Huang J."/>
            <person name="Sun D."/>
            <person name="Wang L."/>
            <person name="Ye M."/>
            <person name="Zou H."/>
        </authorList>
    </citation>
    <scope>PHOSPHORYLATION [LARGE SCALE ANALYSIS] AT SER-254; THR-479 AND SER-493</scope>
    <scope>IDENTIFICATION BY MASS SPECTROMETRY [LARGE SCALE ANALYSIS]</scope>
    <source>
        <tissue>Liver</tissue>
    </source>
</reference>
<reference key="8">
    <citation type="journal article" date="1999" name="FEBS Lett.">
        <title>Solution structure of the Eps15 homology domain of a human POB1 (partner of RalBP1).</title>
        <authorList>
            <person name="Koshiba S."/>
            <person name="Kigawa T."/>
            <person name="Iwahara J."/>
            <person name="Kikuchi A."/>
            <person name="Yokoyama S."/>
        </authorList>
    </citation>
    <scope>STRUCTURE BY NMR OF 265-367</scope>
</reference>
<reference key="9">
    <citation type="journal article" date="2012" name="N. Engl. J. Med.">
        <title>Diagnostic exome sequencing in persons with severe intellectual disability.</title>
        <authorList>
            <person name="de Ligt J."/>
            <person name="Willemsen M.H."/>
            <person name="van Bon B.W."/>
            <person name="Kleefstra T."/>
            <person name="Yntema H.G."/>
            <person name="Kroes T."/>
            <person name="Vulto-van Silfhout A.T."/>
            <person name="Koolen D.A."/>
            <person name="de Vries P."/>
            <person name="Gilissen C."/>
            <person name="del Rosario M."/>
            <person name="Hoischen A."/>
            <person name="Scheffer H."/>
            <person name="de Vries B.B."/>
            <person name="Brunner H.G."/>
            <person name="Veltman J.A."/>
            <person name="Vissers L.E."/>
        </authorList>
    </citation>
    <scope>VARIANT CYS-321</scope>
</reference>
<organism>
    <name type="scientific">Homo sapiens</name>
    <name type="common">Human</name>
    <dbReference type="NCBI Taxonomy" id="9606"/>
    <lineage>
        <taxon>Eukaryota</taxon>
        <taxon>Metazoa</taxon>
        <taxon>Chordata</taxon>
        <taxon>Craniata</taxon>
        <taxon>Vertebrata</taxon>
        <taxon>Euteleostomi</taxon>
        <taxon>Mammalia</taxon>
        <taxon>Eutheria</taxon>
        <taxon>Euarchontoglires</taxon>
        <taxon>Primates</taxon>
        <taxon>Haplorrhini</taxon>
        <taxon>Catarrhini</taxon>
        <taxon>Hominidae</taxon>
        <taxon>Homo</taxon>
    </lineage>
</organism>
<sequence length="660" mass="71534">MEAAAAAAAAAAAAAAAGGGCGSGPPPLLLSEGEQQCYSELFARCAGAAGGGPGSGPPEAARVAPGTATAAAGPVADLFRASQLPAETLHQITELCGAKRVGYFGPTQFYIALKLIAAAQSGLPVRIESIKCELPLPRFMMSKNDGEIRFGNPAELHGTKVQIPYLTTEKNSFKRMDDEDKQQETQSPTMSPLASPPSSPPHYQRVPLSHGYSKLRSSAEQMHPAPYEARQPLVQPEGSSSGGPGTKPLRHQASLIRSFSVERELQDNSSYPDEPWRITEEQREYYVNQFRSLQPDPSSFISGSVAKNFFTKSKLSIPELSYIWELSDADCDGALTLPEFCAAFHLIVARKNGYPLPEGLPPTLQPEYLQAAFPKPKWDCQLFDSYSESLPANQQPRDLNRMEKTSVKDMADLPVPNQDVTSDDKQALKSTINEALPKDVSEDPATPKDSNSLKARPRSRSYSSTSIEEAMKRGEDPPTPPPRPQKTHSRASSLDLNKVFQPSVPATKSGLLPPPPALPPRPCPSQSEQVSEAELLPQLSRAPSQAAESSPAKKDVLYSQPPSKPIRRKFRPENQATENQEPSTAASGPASAATMKPHPTVQKQSSKQKKAIQTAIRKNKEANAVLARLNSELQQQLKEVHQERIALENQLEQLRPVTVL</sequence>
<keyword id="KW-0002">3D-structure</keyword>
<keyword id="KW-0025">Alternative splicing</keyword>
<keyword id="KW-0106">Calcium</keyword>
<keyword id="KW-0175">Coiled coil</keyword>
<keyword id="KW-0963">Cytoplasm</keyword>
<keyword id="KW-0479">Metal-binding</keyword>
<keyword id="KW-0597">Phosphoprotein</keyword>
<keyword id="KW-1267">Proteomics identification</keyword>
<keyword id="KW-1185">Reference proteome</keyword>
<keyword id="KW-0677">Repeat</keyword>
<proteinExistence type="evidence at protein level"/>
<gene>
    <name type="primary">REPS2</name>
    <name type="synonym">POB1</name>
</gene>
<comment type="function">
    <text evidence="5 7 8 10">Involved in ligand-dependent receptor mediated endocytosis of the EGF and insulin receptors as part of the Ral signaling pathway (PubMed:10393179, PubMed:12771942, PubMed:9422736). By controlling growth factor receptors endocytosis may regulate cell survival (PubMed:12771942). Through ASAP1 may regulate cell adhesion and migration (PubMed:12149250).</text>
</comment>
<comment type="subunit">
    <text evidence="5 6 7 10">Interacts with EPN1; the interaction is direct (PubMed:10393179, PubMed:10557078). Interacts with EPS15; the interaction is direct (PubMed:10393179). Interacts with EPS15L1 (PubMed:10393179). Interacts with RALBP1; can form a ternary complex with activated Ral (RALA or RALB) (PubMed:9422736). Interacts with ASAP1; the interaction is direct and this complex can bind paxillin (PubMed:12149250). Also forms a ternary complex with RALBP1 and ASAP1 (PubMed:12149250). Interacts with GRB2 (PubMed:9422736).</text>
</comment>
<comment type="interaction">
    <interactant intactId="EBI-7067016">
        <id>Q8NFH8</id>
    </interactant>
    <interactant intactId="EBI-719094">
        <id>O00499</id>
        <label>BIN1</label>
    </interactant>
    <organismsDiffer>false</organismsDiffer>
    <experiments>6</experiments>
</comment>
<comment type="interaction">
    <interactant intactId="EBI-7067016">
        <id>Q8NFH8</id>
    </interactant>
    <interactant intactId="EBI-401755">
        <id>P62993</id>
        <label>GRB2</label>
    </interactant>
    <organismsDiffer>false</organismsDiffer>
    <experiments>8</experiments>
</comment>
<comment type="interaction">
    <interactant intactId="EBI-7067016">
        <id>Q8NFH8</id>
    </interactant>
    <interactant intactId="EBI-476295">
        <id>P31947</id>
        <label>SFN</label>
    </interactant>
    <organismsDiffer>false</organismsDiffer>
    <experiments>2</experiments>
</comment>
<comment type="interaction">
    <interactant intactId="EBI-7067016">
        <id>Q8NFH8</id>
    </interactant>
    <interactant intactId="EBI-347088">
        <id>P63104</id>
        <label>YWHAZ</label>
    </interactant>
    <organismsDiffer>false</organismsDiffer>
    <experiments>2</experiments>
</comment>
<comment type="interaction">
    <interactant intactId="EBI-7067016">
        <id>Q8NFH8</id>
    </interactant>
    <interactant intactId="EBI-443923">
        <id>P42567</id>
        <label>Eps15</label>
    </interactant>
    <organismsDiffer>true</organismsDiffer>
    <experiments>10</experiments>
</comment>
<comment type="subcellular location">
    <subcellularLocation>
        <location evidence="8">Cytoplasm</location>
    </subcellularLocation>
</comment>
<comment type="alternative products">
    <event type="alternative splicing"/>
    <isoform>
        <id>Q8NFH8-1</id>
        <name>1</name>
        <name>REPS2a</name>
        <name>Long</name>
        <sequence type="displayed"/>
    </isoform>
    <isoform>
        <id>Q8NFH8-4</id>
        <name>2</name>
        <name>REPS2b</name>
        <name>Short</name>
        <sequence type="described" ref="VSP_040086"/>
    </isoform>
</comment>
<comment type="tissue specificity">
    <text evidence="8">Expressed at high levels in the cerebrum, cerebellum, lung, kidney, and testis. Weakly expressed in the kidney. Isoform 2 is down-regulated during progression of prostate cancer.</text>
</comment>
<comment type="PTM">
    <text evidence="10">Tyrosine-phosphorylated upon stimulation of cells with EGF. Phosphorylation on Tyr-residues induces its association with the EGF receptor probably indirectly through an adapter like GRB2.</text>
</comment>
<comment type="sequence caution" evidence="12">
    <conflict type="erroneous initiation">
        <sequence resource="EMBL-CDS" id="AAC02901"/>
    </conflict>
    <text>Truncated N-terminus.</text>
</comment>
<comment type="sequence caution" evidence="12">
    <conflict type="erroneous initiation">
        <sequence resource="EMBL-CDS" id="AAM43953"/>
    </conflict>
    <text>Truncated N-terminus.</text>
</comment>
<comment type="online information" name="Atlas of Genetics and Cytogenetics in Oncology and Haematology">
    <link uri="https://atlasgeneticsoncology.org/gene/44120/REPS2"/>
</comment>
<feature type="chain" id="PRO_0000073831" description="RalBP1-associated Eps domain-containing protein 2">
    <location>
        <begin position="1"/>
        <end position="660"/>
    </location>
</feature>
<feature type="domain" description="EH 1" evidence="2">
    <location>
        <begin position="34"/>
        <end position="147"/>
    </location>
</feature>
<feature type="domain" description="EH 2" evidence="2">
    <location>
        <begin position="282"/>
        <end position="373"/>
    </location>
</feature>
<feature type="domain" description="EF-hand" evidence="3">
    <location>
        <begin position="315"/>
        <end position="350"/>
    </location>
</feature>
<feature type="region of interest" description="Disordered" evidence="4">
    <location>
        <begin position="169"/>
        <end position="208"/>
    </location>
</feature>
<feature type="region of interest" description="Disordered" evidence="4">
    <location>
        <begin position="433"/>
        <end position="616"/>
    </location>
</feature>
<feature type="region of interest" description="Interaction with RALBP1" evidence="10">
    <location>
        <begin position="514"/>
        <end position="660"/>
    </location>
</feature>
<feature type="region of interest" description="Interaction with ASAP1" evidence="7">
    <location>
        <begin position="561"/>
        <end position="660"/>
    </location>
</feature>
<feature type="coiled-coil region" evidence="1">
    <location>
        <begin position="601"/>
        <end position="657"/>
    </location>
</feature>
<feature type="compositionally biased region" description="Pro residues" evidence="4">
    <location>
        <begin position="512"/>
        <end position="523"/>
    </location>
</feature>
<feature type="compositionally biased region" description="Low complexity" evidence="4">
    <location>
        <begin position="582"/>
        <end position="594"/>
    </location>
</feature>
<feature type="binding site" evidence="3">
    <location>
        <position position="328"/>
    </location>
    <ligand>
        <name>Ca(2+)</name>
        <dbReference type="ChEBI" id="CHEBI:29108"/>
    </ligand>
</feature>
<feature type="binding site" evidence="3">
    <location>
        <position position="330"/>
    </location>
    <ligand>
        <name>Ca(2+)</name>
        <dbReference type="ChEBI" id="CHEBI:29108"/>
    </ligand>
</feature>
<feature type="binding site" evidence="3">
    <location>
        <position position="332"/>
    </location>
    <ligand>
        <name>Ca(2+)</name>
        <dbReference type="ChEBI" id="CHEBI:29108"/>
    </ligand>
</feature>
<feature type="binding site" evidence="3">
    <location>
        <position position="339"/>
    </location>
    <ligand>
        <name>Ca(2+)</name>
        <dbReference type="ChEBI" id="CHEBI:29108"/>
    </ligand>
</feature>
<feature type="modified residue" description="Phosphoserine" evidence="13">
    <location>
        <position position="254"/>
    </location>
</feature>
<feature type="modified residue" description="Phosphothreonine" evidence="13">
    <location>
        <position position="479"/>
    </location>
</feature>
<feature type="modified residue" description="Phosphoserine" evidence="13">
    <location>
        <position position="493"/>
    </location>
</feature>
<feature type="splice variant" id="VSP_040086" description="In isoform 2." evidence="11">
    <location>
        <position position="182"/>
    </location>
</feature>
<feature type="sequence variant" id="VAR_069419" description="In dbSNP:rs2062015083." evidence="9">
    <original>S</original>
    <variation>C</variation>
    <location>
        <position position="321"/>
    </location>
</feature>
<feature type="mutagenesis site" description="Abolishes interaction with ASAP1." evidence="7">
    <original>P</original>
    <variation>A</variation>
    <location>
        <position position="562"/>
    </location>
</feature>
<feature type="mutagenesis site" description="Abolishes interaction with ASAP1." evidence="7">
    <original>P</original>
    <variation>A</variation>
    <location>
        <position position="565"/>
    </location>
</feature>
<feature type="strand" evidence="14">
    <location>
        <begin position="279"/>
        <end position="282"/>
    </location>
</feature>
<feature type="helix" evidence="14">
    <location>
        <begin position="283"/>
        <end position="293"/>
    </location>
</feature>
<feature type="strand" evidence="14">
    <location>
        <begin position="296"/>
        <end position="302"/>
    </location>
</feature>
<feature type="helix" evidence="14">
    <location>
        <begin position="303"/>
        <end position="309"/>
    </location>
</feature>
<feature type="strand" evidence="14">
    <location>
        <begin position="312"/>
        <end position="314"/>
    </location>
</feature>
<feature type="helix" evidence="14">
    <location>
        <begin position="320"/>
        <end position="327"/>
    </location>
</feature>
<feature type="strand" evidence="14">
    <location>
        <begin position="329"/>
        <end position="331"/>
    </location>
</feature>
<feature type="strand" evidence="14">
    <location>
        <begin position="333"/>
        <end position="336"/>
    </location>
</feature>
<feature type="helix" evidence="14">
    <location>
        <begin position="337"/>
        <end position="352"/>
    </location>
</feature>
<protein>
    <recommendedName>
        <fullName>RalBP1-associated Eps domain-containing protein 2</fullName>
    </recommendedName>
    <alternativeName>
        <fullName>Partner of RalBP1</fullName>
    </alternativeName>
    <alternativeName>
        <fullName>RalBP1-interacting protein 2</fullName>
    </alternativeName>
</protein>
<dbReference type="EMBL" id="AF010233">
    <property type="protein sequence ID" value="AAC02901.1"/>
    <property type="status" value="ALT_INIT"/>
    <property type="molecule type" value="mRNA"/>
</dbReference>
<dbReference type="EMBL" id="AF511533">
    <property type="protein sequence ID" value="AAM43933.1"/>
    <property type="molecule type" value="mRNA"/>
</dbReference>
<dbReference type="EMBL" id="AF512951">
    <property type="protein sequence ID" value="AAM43953.1"/>
    <property type="status" value="ALT_INIT"/>
    <property type="molecule type" value="mRNA"/>
</dbReference>
<dbReference type="EMBL" id="AL732371">
    <property type="status" value="NOT_ANNOTATED_CDS"/>
    <property type="molecule type" value="Genomic_DNA"/>
</dbReference>
<dbReference type="EMBL" id="AL929302">
    <property type="status" value="NOT_ANNOTATED_CDS"/>
    <property type="molecule type" value="Genomic_DNA"/>
</dbReference>
<dbReference type="CCDS" id="CCDS14180.2">
    <molecule id="Q8NFH8-1"/>
</dbReference>
<dbReference type="CCDS" id="CCDS43919.1">
    <molecule id="Q8NFH8-4"/>
</dbReference>
<dbReference type="RefSeq" id="NP_001074444.1">
    <molecule id="Q8NFH8-4"/>
    <property type="nucleotide sequence ID" value="NM_001080975.2"/>
</dbReference>
<dbReference type="RefSeq" id="NP_004717.2">
    <molecule id="Q8NFH8-1"/>
    <property type="nucleotide sequence ID" value="NM_004726.3"/>
</dbReference>
<dbReference type="PDB" id="1IQ3">
    <property type="method" value="NMR"/>
    <property type="chains" value="A=265-367"/>
</dbReference>
<dbReference type="PDBsum" id="1IQ3"/>
<dbReference type="SMR" id="Q8NFH8"/>
<dbReference type="BioGRID" id="114622">
    <property type="interactions" value="31"/>
</dbReference>
<dbReference type="FunCoup" id="Q8NFH8">
    <property type="interactions" value="1423"/>
</dbReference>
<dbReference type="IntAct" id="Q8NFH8">
    <property type="interactions" value="26"/>
</dbReference>
<dbReference type="MINT" id="Q8NFH8"/>
<dbReference type="STRING" id="9606.ENSP00000349824"/>
<dbReference type="GlyCosmos" id="Q8NFH8">
    <property type="glycosylation" value="1 site, 1 glycan"/>
</dbReference>
<dbReference type="GlyGen" id="Q8NFH8">
    <property type="glycosylation" value="2 sites, 1 O-linked glycan (1 site)"/>
</dbReference>
<dbReference type="iPTMnet" id="Q8NFH8"/>
<dbReference type="PhosphoSitePlus" id="Q8NFH8"/>
<dbReference type="BioMuta" id="REPS2"/>
<dbReference type="DMDM" id="34098575"/>
<dbReference type="jPOST" id="Q8NFH8"/>
<dbReference type="MassIVE" id="Q8NFH8"/>
<dbReference type="PaxDb" id="9606-ENSP00000349824"/>
<dbReference type="PeptideAtlas" id="Q8NFH8"/>
<dbReference type="ProteomicsDB" id="73308">
    <molecule id="Q8NFH8-1"/>
</dbReference>
<dbReference type="ProteomicsDB" id="73311">
    <molecule id="Q8NFH8-4"/>
</dbReference>
<dbReference type="Pumba" id="Q8NFH8"/>
<dbReference type="Antibodypedia" id="434">
    <property type="antibodies" value="113 antibodies from 26 providers"/>
</dbReference>
<dbReference type="DNASU" id="9185"/>
<dbReference type="Ensembl" id="ENST00000303843.7">
    <molecule id="Q8NFH8-4"/>
    <property type="protein sequence ID" value="ENSP00000306033.7"/>
    <property type="gene ID" value="ENSG00000169891.18"/>
</dbReference>
<dbReference type="Ensembl" id="ENST00000357277.8">
    <molecule id="Q8NFH8-1"/>
    <property type="protein sequence ID" value="ENSP00000349824.3"/>
    <property type="gene ID" value="ENSG00000169891.18"/>
</dbReference>
<dbReference type="GeneID" id="9185"/>
<dbReference type="KEGG" id="hsa:9185"/>
<dbReference type="MANE-Select" id="ENST00000357277.8">
    <property type="protein sequence ID" value="ENSP00000349824.3"/>
    <property type="RefSeq nucleotide sequence ID" value="NM_004726.3"/>
    <property type="RefSeq protein sequence ID" value="NP_004717.2"/>
</dbReference>
<dbReference type="UCSC" id="uc004cxv.1">
    <molecule id="Q8NFH8-1"/>
    <property type="organism name" value="human"/>
</dbReference>
<dbReference type="AGR" id="HGNC:9963"/>
<dbReference type="CTD" id="9185"/>
<dbReference type="DisGeNET" id="9185"/>
<dbReference type="GeneCards" id="REPS2"/>
<dbReference type="HGNC" id="HGNC:9963">
    <property type="gene designation" value="REPS2"/>
</dbReference>
<dbReference type="HPA" id="ENSG00000169891">
    <property type="expression patterns" value="Low tissue specificity"/>
</dbReference>
<dbReference type="MalaCards" id="REPS2"/>
<dbReference type="MIM" id="300317">
    <property type="type" value="gene"/>
</dbReference>
<dbReference type="neXtProt" id="NX_Q8NFH8"/>
<dbReference type="OpenTargets" id="ENSG00000169891"/>
<dbReference type="PharmGKB" id="PA34330"/>
<dbReference type="VEuPathDB" id="HostDB:ENSG00000169891"/>
<dbReference type="eggNOG" id="KOG1955">
    <property type="taxonomic scope" value="Eukaryota"/>
</dbReference>
<dbReference type="GeneTree" id="ENSGT00940000158080"/>
<dbReference type="HOGENOM" id="CLU_014864_1_0_1"/>
<dbReference type="InParanoid" id="Q8NFH8"/>
<dbReference type="OMA" id="EEVWIIS"/>
<dbReference type="OrthoDB" id="10045710at2759"/>
<dbReference type="PAN-GO" id="Q8NFH8">
    <property type="GO annotations" value="4 GO annotations based on evolutionary models"/>
</dbReference>
<dbReference type="PhylomeDB" id="Q8NFH8"/>
<dbReference type="TreeFam" id="TF316546"/>
<dbReference type="PathwayCommons" id="Q8NFH8"/>
<dbReference type="Reactome" id="R-HSA-8856825">
    <property type="pathway name" value="Cargo recognition for clathrin-mediated endocytosis"/>
</dbReference>
<dbReference type="Reactome" id="R-HSA-8856828">
    <property type="pathway name" value="Clathrin-mediated endocytosis"/>
</dbReference>
<dbReference type="SignaLink" id="Q8NFH8"/>
<dbReference type="SIGNOR" id="Q8NFH8"/>
<dbReference type="BioGRID-ORCS" id="9185">
    <property type="hits" value="10 hits in 773 CRISPR screens"/>
</dbReference>
<dbReference type="CD-CODE" id="FB4E32DD">
    <property type="entry name" value="Presynaptic clusters and postsynaptic densities"/>
</dbReference>
<dbReference type="ChiTaRS" id="REPS2">
    <property type="organism name" value="human"/>
</dbReference>
<dbReference type="EvolutionaryTrace" id="Q8NFH8"/>
<dbReference type="GeneWiki" id="REPS2"/>
<dbReference type="GenomeRNAi" id="9185"/>
<dbReference type="Pharos" id="Q8NFH8">
    <property type="development level" value="Tbio"/>
</dbReference>
<dbReference type="PRO" id="PR:Q8NFH8"/>
<dbReference type="Proteomes" id="UP000005640">
    <property type="component" value="Chromosome X"/>
</dbReference>
<dbReference type="RNAct" id="Q8NFH8">
    <property type="molecule type" value="protein"/>
</dbReference>
<dbReference type="Bgee" id="ENSG00000169891">
    <property type="expression patterns" value="Expressed in middle temporal gyrus and 159 other cell types or tissues"/>
</dbReference>
<dbReference type="GO" id="GO:0005737">
    <property type="term" value="C:cytoplasm"/>
    <property type="evidence" value="ECO:0000318"/>
    <property type="project" value="GO_Central"/>
</dbReference>
<dbReference type="GO" id="GO:0005829">
    <property type="term" value="C:cytosol"/>
    <property type="evidence" value="ECO:0000304"/>
    <property type="project" value="Reactome"/>
</dbReference>
<dbReference type="GO" id="GO:0005886">
    <property type="term" value="C:plasma membrane"/>
    <property type="evidence" value="ECO:0000318"/>
    <property type="project" value="GO_Central"/>
</dbReference>
<dbReference type="GO" id="GO:0005509">
    <property type="term" value="F:calcium ion binding"/>
    <property type="evidence" value="ECO:0000304"/>
    <property type="project" value="ProtInc"/>
</dbReference>
<dbReference type="GO" id="GO:0006897">
    <property type="term" value="P:endocytosis"/>
    <property type="evidence" value="ECO:0000318"/>
    <property type="project" value="GO_Central"/>
</dbReference>
<dbReference type="GO" id="GO:0016197">
    <property type="term" value="P:endosomal transport"/>
    <property type="evidence" value="ECO:0000318"/>
    <property type="project" value="GO_Central"/>
</dbReference>
<dbReference type="GO" id="GO:0007173">
    <property type="term" value="P:epidermal growth factor receptor signaling pathway"/>
    <property type="evidence" value="ECO:0000304"/>
    <property type="project" value="ProtInc"/>
</dbReference>
<dbReference type="GO" id="GO:0065003">
    <property type="term" value="P:protein-containing complex assembly"/>
    <property type="evidence" value="ECO:0000304"/>
    <property type="project" value="ProtInc"/>
</dbReference>
<dbReference type="CDD" id="cd00052">
    <property type="entry name" value="EH"/>
    <property type="match status" value="1"/>
</dbReference>
<dbReference type="FunFam" id="1.10.238.10:FF:000084">
    <property type="entry name" value="ralBP1-associated Eps domain-containing protein 1 isoform X2"/>
    <property type="match status" value="1"/>
</dbReference>
<dbReference type="FunFam" id="1.10.238.10:FF:000039">
    <property type="entry name" value="RalBP1-associated Eps domain-containing protein 2 isoform 1"/>
    <property type="match status" value="1"/>
</dbReference>
<dbReference type="Gene3D" id="1.10.238.10">
    <property type="entry name" value="EF-hand"/>
    <property type="match status" value="2"/>
</dbReference>
<dbReference type="InterPro" id="IPR011992">
    <property type="entry name" value="EF-hand-dom_pair"/>
</dbReference>
<dbReference type="InterPro" id="IPR018247">
    <property type="entry name" value="EF_Hand_1_Ca_BS"/>
</dbReference>
<dbReference type="InterPro" id="IPR002048">
    <property type="entry name" value="EF_hand_dom"/>
</dbReference>
<dbReference type="InterPro" id="IPR000261">
    <property type="entry name" value="EH_dom"/>
</dbReference>
<dbReference type="PANTHER" id="PTHR11216">
    <property type="entry name" value="EH DOMAIN"/>
    <property type="match status" value="1"/>
</dbReference>
<dbReference type="PANTHER" id="PTHR11216:SF64">
    <property type="entry name" value="RALBP1-ASSOCIATED EPS DOMAIN-CONTAINING PROTEIN 2"/>
    <property type="match status" value="1"/>
</dbReference>
<dbReference type="Pfam" id="PF12763">
    <property type="entry name" value="EH"/>
    <property type="match status" value="2"/>
</dbReference>
<dbReference type="SMART" id="SM00027">
    <property type="entry name" value="EH"/>
    <property type="match status" value="1"/>
</dbReference>
<dbReference type="SUPFAM" id="SSF47473">
    <property type="entry name" value="EF-hand"/>
    <property type="match status" value="2"/>
</dbReference>
<dbReference type="PROSITE" id="PS00018">
    <property type="entry name" value="EF_HAND_1"/>
    <property type="match status" value="1"/>
</dbReference>
<dbReference type="PROSITE" id="PS50222">
    <property type="entry name" value="EF_HAND_2"/>
    <property type="match status" value="1"/>
</dbReference>
<dbReference type="PROSITE" id="PS50031">
    <property type="entry name" value="EH"/>
    <property type="match status" value="2"/>
</dbReference>
<evidence type="ECO:0000255" key="1"/>
<evidence type="ECO:0000255" key="2">
    <source>
        <dbReference type="PROSITE-ProRule" id="PRU00077"/>
    </source>
</evidence>
<evidence type="ECO:0000255" key="3">
    <source>
        <dbReference type="PROSITE-ProRule" id="PRU00448"/>
    </source>
</evidence>
<evidence type="ECO:0000256" key="4">
    <source>
        <dbReference type="SAM" id="MobiDB-lite"/>
    </source>
</evidence>
<evidence type="ECO:0000269" key="5">
    <source>
    </source>
</evidence>
<evidence type="ECO:0000269" key="6">
    <source>
    </source>
</evidence>
<evidence type="ECO:0000269" key="7">
    <source>
    </source>
</evidence>
<evidence type="ECO:0000269" key="8">
    <source>
    </source>
</evidence>
<evidence type="ECO:0000269" key="9">
    <source>
    </source>
</evidence>
<evidence type="ECO:0000269" key="10">
    <source>
    </source>
</evidence>
<evidence type="ECO:0000303" key="11">
    <source>
    </source>
</evidence>
<evidence type="ECO:0000305" key="12"/>
<evidence type="ECO:0007744" key="13">
    <source>
    </source>
</evidence>
<evidence type="ECO:0007829" key="14">
    <source>
        <dbReference type="PDB" id="1IQ3"/>
    </source>
</evidence>
<accession>Q8NFH8</accession>
<accession>A6PWZ6</accession>
<accession>O43428</accession>
<accession>Q5JNZ8</accession>
<accession>Q8NFI5</accession>